<feature type="chain" id="PRO_0000233990" description="Zinc finger protein 671">
    <location>
        <begin position="1"/>
        <end position="534"/>
    </location>
</feature>
<feature type="domain" description="KRAB" evidence="2">
    <location>
        <begin position="49"/>
        <end position="120"/>
    </location>
</feature>
<feature type="zinc finger region" description="C2H2-type 1; degenerate" evidence="1">
    <location>
        <begin position="192"/>
        <end position="214"/>
    </location>
</feature>
<feature type="zinc finger region" description="C2H2-type 2" evidence="1">
    <location>
        <begin position="285"/>
        <end position="307"/>
    </location>
</feature>
<feature type="zinc finger region" description="C2H2-type 3" evidence="1">
    <location>
        <begin position="313"/>
        <end position="335"/>
    </location>
</feature>
<feature type="zinc finger region" description="C2H2-type 4" evidence="1">
    <location>
        <begin position="341"/>
        <end position="363"/>
    </location>
</feature>
<feature type="zinc finger region" description="C2H2-type 5" evidence="1">
    <location>
        <begin position="369"/>
        <end position="391"/>
    </location>
</feature>
<feature type="zinc finger region" description="C2H2-type 6" evidence="1">
    <location>
        <begin position="397"/>
        <end position="419"/>
    </location>
</feature>
<feature type="zinc finger region" description="C2H2-type 7" evidence="1">
    <location>
        <begin position="425"/>
        <end position="447"/>
    </location>
</feature>
<feature type="zinc finger region" description="C2H2-type 8" evidence="1">
    <location>
        <begin position="451"/>
        <end position="473"/>
    </location>
</feature>
<feature type="zinc finger region" description="C2H2-type 9" evidence="1">
    <location>
        <begin position="479"/>
        <end position="501"/>
    </location>
</feature>
<feature type="zinc finger region" description="C2H2-type 10" evidence="1">
    <location>
        <begin position="507"/>
        <end position="529"/>
    </location>
</feature>
<feature type="sequence variant" id="VAR_026151" description="In dbSNP:rs3746207." evidence="3">
    <original>A</original>
    <variation>V</variation>
    <location>
        <position position="149"/>
    </location>
</feature>
<feature type="sequence variant" id="VAR_055240" description="In dbSNP:rs34419645.">
    <original>P</original>
    <variation>S</variation>
    <location>
        <position position="237"/>
    </location>
</feature>
<name>ZN671_HUMAN</name>
<keyword id="KW-0238">DNA-binding</keyword>
<keyword id="KW-0479">Metal-binding</keyword>
<keyword id="KW-0539">Nucleus</keyword>
<keyword id="KW-1267">Proteomics identification</keyword>
<keyword id="KW-1185">Reference proteome</keyword>
<keyword id="KW-0677">Repeat</keyword>
<keyword id="KW-0804">Transcription</keyword>
<keyword id="KW-0805">Transcription regulation</keyword>
<keyword id="KW-0862">Zinc</keyword>
<keyword id="KW-0863">Zinc-finger</keyword>
<accession>Q8TAW3</accession>
<accession>A6NF07</accession>
<accession>Q9H5E9</accession>
<protein>
    <recommendedName>
        <fullName>Zinc finger protein 671</fullName>
    </recommendedName>
</protein>
<evidence type="ECO:0000255" key="1">
    <source>
        <dbReference type="PROSITE-ProRule" id="PRU00042"/>
    </source>
</evidence>
<evidence type="ECO:0000255" key="2">
    <source>
        <dbReference type="PROSITE-ProRule" id="PRU00119"/>
    </source>
</evidence>
<evidence type="ECO:0000269" key="3">
    <source>
    </source>
</evidence>
<evidence type="ECO:0000305" key="4"/>
<gene>
    <name type="primary">ZNF671</name>
</gene>
<reference key="1">
    <citation type="journal article" date="2004" name="Nat. Genet.">
        <title>Complete sequencing and characterization of 21,243 full-length human cDNAs.</title>
        <authorList>
            <person name="Ota T."/>
            <person name="Suzuki Y."/>
            <person name="Nishikawa T."/>
            <person name="Otsuki T."/>
            <person name="Sugiyama T."/>
            <person name="Irie R."/>
            <person name="Wakamatsu A."/>
            <person name="Hayashi K."/>
            <person name="Sato H."/>
            <person name="Nagai K."/>
            <person name="Kimura K."/>
            <person name="Makita H."/>
            <person name="Sekine M."/>
            <person name="Obayashi M."/>
            <person name="Nishi T."/>
            <person name="Shibahara T."/>
            <person name="Tanaka T."/>
            <person name="Ishii S."/>
            <person name="Yamamoto J."/>
            <person name="Saito K."/>
            <person name="Kawai Y."/>
            <person name="Isono Y."/>
            <person name="Nakamura Y."/>
            <person name="Nagahari K."/>
            <person name="Murakami K."/>
            <person name="Yasuda T."/>
            <person name="Iwayanagi T."/>
            <person name="Wagatsuma M."/>
            <person name="Shiratori A."/>
            <person name="Sudo H."/>
            <person name="Hosoiri T."/>
            <person name="Kaku Y."/>
            <person name="Kodaira H."/>
            <person name="Kondo H."/>
            <person name="Sugawara M."/>
            <person name="Takahashi M."/>
            <person name="Kanda K."/>
            <person name="Yokoi T."/>
            <person name="Furuya T."/>
            <person name="Kikkawa E."/>
            <person name="Omura Y."/>
            <person name="Abe K."/>
            <person name="Kamihara K."/>
            <person name="Katsuta N."/>
            <person name="Sato K."/>
            <person name="Tanikawa M."/>
            <person name="Yamazaki M."/>
            <person name="Ninomiya K."/>
            <person name="Ishibashi T."/>
            <person name="Yamashita H."/>
            <person name="Murakawa K."/>
            <person name="Fujimori K."/>
            <person name="Tanai H."/>
            <person name="Kimata M."/>
            <person name="Watanabe M."/>
            <person name="Hiraoka S."/>
            <person name="Chiba Y."/>
            <person name="Ishida S."/>
            <person name="Ono Y."/>
            <person name="Takiguchi S."/>
            <person name="Watanabe S."/>
            <person name="Yosida M."/>
            <person name="Hotuta T."/>
            <person name="Kusano J."/>
            <person name="Kanehori K."/>
            <person name="Takahashi-Fujii A."/>
            <person name="Hara H."/>
            <person name="Tanase T.-O."/>
            <person name="Nomura Y."/>
            <person name="Togiya S."/>
            <person name="Komai F."/>
            <person name="Hara R."/>
            <person name="Takeuchi K."/>
            <person name="Arita M."/>
            <person name="Imose N."/>
            <person name="Musashino K."/>
            <person name="Yuuki H."/>
            <person name="Oshima A."/>
            <person name="Sasaki N."/>
            <person name="Aotsuka S."/>
            <person name="Yoshikawa Y."/>
            <person name="Matsunawa H."/>
            <person name="Ichihara T."/>
            <person name="Shiohata N."/>
            <person name="Sano S."/>
            <person name="Moriya S."/>
            <person name="Momiyama H."/>
            <person name="Satoh N."/>
            <person name="Takami S."/>
            <person name="Terashima Y."/>
            <person name="Suzuki O."/>
            <person name="Nakagawa S."/>
            <person name="Senoh A."/>
            <person name="Mizoguchi H."/>
            <person name="Goto Y."/>
            <person name="Shimizu F."/>
            <person name="Wakebe H."/>
            <person name="Hishigaki H."/>
            <person name="Watanabe T."/>
            <person name="Sugiyama A."/>
            <person name="Takemoto M."/>
            <person name="Kawakami B."/>
            <person name="Yamazaki M."/>
            <person name="Watanabe K."/>
            <person name="Kumagai A."/>
            <person name="Itakura S."/>
            <person name="Fukuzumi Y."/>
            <person name="Fujimori Y."/>
            <person name="Komiyama M."/>
            <person name="Tashiro H."/>
            <person name="Tanigami A."/>
            <person name="Fujiwara T."/>
            <person name="Ono T."/>
            <person name="Yamada K."/>
            <person name="Fujii Y."/>
            <person name="Ozaki K."/>
            <person name="Hirao M."/>
            <person name="Ohmori Y."/>
            <person name="Kawabata A."/>
            <person name="Hikiji T."/>
            <person name="Kobatake N."/>
            <person name="Inagaki H."/>
            <person name="Ikema Y."/>
            <person name="Okamoto S."/>
            <person name="Okitani R."/>
            <person name="Kawakami T."/>
            <person name="Noguchi S."/>
            <person name="Itoh T."/>
            <person name="Shigeta K."/>
            <person name="Senba T."/>
            <person name="Matsumura K."/>
            <person name="Nakajima Y."/>
            <person name="Mizuno T."/>
            <person name="Morinaga M."/>
            <person name="Sasaki M."/>
            <person name="Togashi T."/>
            <person name="Oyama M."/>
            <person name="Hata H."/>
            <person name="Watanabe M."/>
            <person name="Komatsu T."/>
            <person name="Mizushima-Sugano J."/>
            <person name="Satoh T."/>
            <person name="Shirai Y."/>
            <person name="Takahashi Y."/>
            <person name="Nakagawa K."/>
            <person name="Okumura K."/>
            <person name="Nagase T."/>
            <person name="Nomura N."/>
            <person name="Kikuchi H."/>
            <person name="Masuho Y."/>
            <person name="Yamashita R."/>
            <person name="Nakai K."/>
            <person name="Yada T."/>
            <person name="Nakamura Y."/>
            <person name="Ohara O."/>
            <person name="Isogai T."/>
            <person name="Sugano S."/>
        </authorList>
    </citation>
    <scope>NUCLEOTIDE SEQUENCE [LARGE SCALE MRNA]</scope>
    <scope>VARIANT VAL-149</scope>
    <source>
        <tissue>Lung</tissue>
    </source>
</reference>
<reference key="2">
    <citation type="journal article" date="2004" name="Nature">
        <title>The DNA sequence and biology of human chromosome 19.</title>
        <authorList>
            <person name="Grimwood J."/>
            <person name="Gordon L.A."/>
            <person name="Olsen A.S."/>
            <person name="Terry A."/>
            <person name="Schmutz J."/>
            <person name="Lamerdin J.E."/>
            <person name="Hellsten U."/>
            <person name="Goodstein D."/>
            <person name="Couronne O."/>
            <person name="Tran-Gyamfi M."/>
            <person name="Aerts A."/>
            <person name="Altherr M."/>
            <person name="Ashworth L."/>
            <person name="Bajorek E."/>
            <person name="Black S."/>
            <person name="Branscomb E."/>
            <person name="Caenepeel S."/>
            <person name="Carrano A.V."/>
            <person name="Caoile C."/>
            <person name="Chan Y.M."/>
            <person name="Christensen M."/>
            <person name="Cleland C.A."/>
            <person name="Copeland A."/>
            <person name="Dalin E."/>
            <person name="Dehal P."/>
            <person name="Denys M."/>
            <person name="Detter J.C."/>
            <person name="Escobar J."/>
            <person name="Flowers D."/>
            <person name="Fotopulos D."/>
            <person name="Garcia C."/>
            <person name="Georgescu A.M."/>
            <person name="Glavina T."/>
            <person name="Gomez M."/>
            <person name="Gonzales E."/>
            <person name="Groza M."/>
            <person name="Hammon N."/>
            <person name="Hawkins T."/>
            <person name="Haydu L."/>
            <person name="Ho I."/>
            <person name="Huang W."/>
            <person name="Israni S."/>
            <person name="Jett J."/>
            <person name="Kadner K."/>
            <person name="Kimball H."/>
            <person name="Kobayashi A."/>
            <person name="Larionov V."/>
            <person name="Leem S.-H."/>
            <person name="Lopez F."/>
            <person name="Lou Y."/>
            <person name="Lowry S."/>
            <person name="Malfatti S."/>
            <person name="Martinez D."/>
            <person name="McCready P.M."/>
            <person name="Medina C."/>
            <person name="Morgan J."/>
            <person name="Nelson K."/>
            <person name="Nolan M."/>
            <person name="Ovcharenko I."/>
            <person name="Pitluck S."/>
            <person name="Pollard M."/>
            <person name="Popkie A.P."/>
            <person name="Predki P."/>
            <person name="Quan G."/>
            <person name="Ramirez L."/>
            <person name="Rash S."/>
            <person name="Retterer J."/>
            <person name="Rodriguez A."/>
            <person name="Rogers S."/>
            <person name="Salamov A."/>
            <person name="Salazar A."/>
            <person name="She X."/>
            <person name="Smith D."/>
            <person name="Slezak T."/>
            <person name="Solovyev V."/>
            <person name="Thayer N."/>
            <person name="Tice H."/>
            <person name="Tsai M."/>
            <person name="Ustaszewska A."/>
            <person name="Vo N."/>
            <person name="Wagner M."/>
            <person name="Wheeler J."/>
            <person name="Wu K."/>
            <person name="Xie G."/>
            <person name="Yang J."/>
            <person name="Dubchak I."/>
            <person name="Furey T.S."/>
            <person name="DeJong P."/>
            <person name="Dickson M."/>
            <person name="Gordon D."/>
            <person name="Eichler E.E."/>
            <person name="Pennacchio L.A."/>
            <person name="Richardson P."/>
            <person name="Stubbs L."/>
            <person name="Rokhsar D.S."/>
            <person name="Myers R.M."/>
            <person name="Rubin E.M."/>
            <person name="Lucas S.M."/>
        </authorList>
    </citation>
    <scope>NUCLEOTIDE SEQUENCE [LARGE SCALE GENOMIC DNA]</scope>
</reference>
<reference key="3">
    <citation type="submission" date="2005-07" db="EMBL/GenBank/DDBJ databases">
        <authorList>
            <person name="Mural R.J."/>
            <person name="Istrail S."/>
            <person name="Sutton G.G."/>
            <person name="Florea L."/>
            <person name="Halpern A.L."/>
            <person name="Mobarry C.M."/>
            <person name="Lippert R."/>
            <person name="Walenz B."/>
            <person name="Shatkay H."/>
            <person name="Dew I."/>
            <person name="Miller J.R."/>
            <person name="Flanigan M.J."/>
            <person name="Edwards N.J."/>
            <person name="Bolanos R."/>
            <person name="Fasulo D."/>
            <person name="Halldorsson B.V."/>
            <person name="Hannenhalli S."/>
            <person name="Turner R."/>
            <person name="Yooseph S."/>
            <person name="Lu F."/>
            <person name="Nusskern D.R."/>
            <person name="Shue B.C."/>
            <person name="Zheng X.H."/>
            <person name="Zhong F."/>
            <person name="Delcher A.L."/>
            <person name="Huson D.H."/>
            <person name="Kravitz S.A."/>
            <person name="Mouchard L."/>
            <person name="Reinert K."/>
            <person name="Remington K.A."/>
            <person name="Clark A.G."/>
            <person name="Waterman M.S."/>
            <person name="Eichler E.E."/>
            <person name="Adams M.D."/>
            <person name="Hunkapiller M.W."/>
            <person name="Myers E.W."/>
            <person name="Venter J.C."/>
        </authorList>
    </citation>
    <scope>NUCLEOTIDE SEQUENCE [LARGE SCALE GENOMIC DNA]</scope>
</reference>
<reference key="4">
    <citation type="journal article" date="2004" name="Genome Res.">
        <title>The status, quality, and expansion of the NIH full-length cDNA project: the Mammalian Gene Collection (MGC).</title>
        <authorList>
            <consortium name="The MGC Project Team"/>
        </authorList>
    </citation>
    <scope>NUCLEOTIDE SEQUENCE [LARGE SCALE MRNA]</scope>
    <source>
        <tissue>Lung</tissue>
    </source>
</reference>
<proteinExistence type="evidence at protein level"/>
<comment type="function">
    <text>May be involved in transcriptional regulation.</text>
</comment>
<comment type="subcellular location">
    <subcellularLocation>
        <location evidence="4">Nucleus</location>
    </subcellularLocation>
</comment>
<comment type="similarity">
    <text evidence="4">Belongs to the krueppel C2H2-type zinc-finger protein family.</text>
</comment>
<comment type="sequence caution" evidence="4">
    <conflict type="frameshift">
        <sequence resource="EMBL-CDS" id="AAH25728"/>
    </conflict>
</comment>
<dbReference type="EMBL" id="AK027159">
    <property type="protein sequence ID" value="BAB15677.1"/>
    <property type="molecule type" value="mRNA"/>
</dbReference>
<dbReference type="EMBL" id="AC003006">
    <property type="status" value="NOT_ANNOTATED_CDS"/>
    <property type="molecule type" value="Genomic_DNA"/>
</dbReference>
<dbReference type="EMBL" id="CH471135">
    <property type="protein sequence ID" value="EAW72529.1"/>
    <property type="molecule type" value="Genomic_DNA"/>
</dbReference>
<dbReference type="EMBL" id="BC025728">
    <property type="protein sequence ID" value="AAH25728.1"/>
    <property type="status" value="ALT_FRAME"/>
    <property type="molecule type" value="mRNA"/>
</dbReference>
<dbReference type="CCDS" id="CCDS12961.1"/>
<dbReference type="RefSeq" id="NP_079109.2">
    <property type="nucleotide sequence ID" value="NM_024833.3"/>
</dbReference>
<dbReference type="SMR" id="Q8TAW3"/>
<dbReference type="BioGRID" id="122975">
    <property type="interactions" value="4"/>
</dbReference>
<dbReference type="FunCoup" id="Q8TAW3">
    <property type="interactions" value="2"/>
</dbReference>
<dbReference type="IntAct" id="Q8TAW3">
    <property type="interactions" value="1"/>
</dbReference>
<dbReference type="MINT" id="Q8TAW3"/>
<dbReference type="STRING" id="9606.ENSP00000321848"/>
<dbReference type="GlyGen" id="Q8TAW3">
    <property type="glycosylation" value="1 site, 1 O-linked glycan (1 site)"/>
</dbReference>
<dbReference type="iPTMnet" id="Q8TAW3"/>
<dbReference type="PhosphoSitePlus" id="Q8TAW3"/>
<dbReference type="BioMuta" id="ZNF671"/>
<dbReference type="DMDM" id="229462791"/>
<dbReference type="jPOST" id="Q8TAW3"/>
<dbReference type="MassIVE" id="Q8TAW3"/>
<dbReference type="PaxDb" id="9606-ENSP00000321848"/>
<dbReference type="PeptideAtlas" id="Q8TAW3"/>
<dbReference type="ProteomicsDB" id="73931"/>
<dbReference type="Antibodypedia" id="33287">
    <property type="antibodies" value="91 antibodies from 21 providers"/>
</dbReference>
<dbReference type="DNASU" id="79891"/>
<dbReference type="Ensembl" id="ENST00000317398.10">
    <property type="protein sequence ID" value="ENSP00000321848.5"/>
    <property type="gene ID" value="ENSG00000083814.13"/>
</dbReference>
<dbReference type="GeneID" id="79891"/>
<dbReference type="KEGG" id="hsa:79891"/>
<dbReference type="MANE-Select" id="ENST00000317398.10">
    <property type="protein sequence ID" value="ENSP00000321848.5"/>
    <property type="RefSeq nucleotide sequence ID" value="NM_024833.3"/>
    <property type="RefSeq protein sequence ID" value="NP_079109.2"/>
</dbReference>
<dbReference type="UCSC" id="uc002qpz.5">
    <property type="organism name" value="human"/>
</dbReference>
<dbReference type="AGR" id="HGNC:26279"/>
<dbReference type="CTD" id="79891"/>
<dbReference type="DisGeNET" id="79891"/>
<dbReference type="GeneCards" id="ZNF671"/>
<dbReference type="HGNC" id="HGNC:26279">
    <property type="gene designation" value="ZNF671"/>
</dbReference>
<dbReference type="HPA" id="ENSG00000083814">
    <property type="expression patterns" value="Low tissue specificity"/>
</dbReference>
<dbReference type="neXtProt" id="NX_Q8TAW3"/>
<dbReference type="OpenTargets" id="ENSG00000083814"/>
<dbReference type="PharmGKB" id="PA142670518"/>
<dbReference type="VEuPathDB" id="HostDB:ENSG00000083814"/>
<dbReference type="eggNOG" id="KOG1721">
    <property type="taxonomic scope" value="Eukaryota"/>
</dbReference>
<dbReference type="GeneTree" id="ENSGT00940000163659"/>
<dbReference type="HOGENOM" id="CLU_002678_0_2_1"/>
<dbReference type="InParanoid" id="Q8TAW3"/>
<dbReference type="OMA" id="SRMKPHK"/>
<dbReference type="OrthoDB" id="8922241at2759"/>
<dbReference type="PAN-GO" id="Q8TAW3">
    <property type="GO annotations" value="3 GO annotations based on evolutionary models"/>
</dbReference>
<dbReference type="PhylomeDB" id="Q8TAW3"/>
<dbReference type="TreeFam" id="TF342033"/>
<dbReference type="PathwayCommons" id="Q8TAW3"/>
<dbReference type="Reactome" id="R-HSA-212436">
    <property type="pathway name" value="Generic Transcription Pathway"/>
</dbReference>
<dbReference type="SignaLink" id="Q8TAW3"/>
<dbReference type="BioGRID-ORCS" id="79891">
    <property type="hits" value="13 hits in 1180 CRISPR screens"/>
</dbReference>
<dbReference type="ChiTaRS" id="ZNF671">
    <property type="organism name" value="human"/>
</dbReference>
<dbReference type="GenomeRNAi" id="79891"/>
<dbReference type="Pharos" id="Q8TAW3">
    <property type="development level" value="Tbio"/>
</dbReference>
<dbReference type="PRO" id="PR:Q8TAW3"/>
<dbReference type="Proteomes" id="UP000005640">
    <property type="component" value="Chromosome 19"/>
</dbReference>
<dbReference type="RNAct" id="Q8TAW3">
    <property type="molecule type" value="protein"/>
</dbReference>
<dbReference type="Bgee" id="ENSG00000083814">
    <property type="expression patterns" value="Expressed in cerebellar hemisphere and 118 other cell types or tissues"/>
</dbReference>
<dbReference type="ExpressionAtlas" id="Q8TAW3">
    <property type="expression patterns" value="baseline and differential"/>
</dbReference>
<dbReference type="GO" id="GO:0005634">
    <property type="term" value="C:nucleus"/>
    <property type="evidence" value="ECO:0007669"/>
    <property type="project" value="UniProtKB-SubCell"/>
</dbReference>
<dbReference type="GO" id="GO:0003700">
    <property type="term" value="F:DNA-binding transcription factor activity"/>
    <property type="evidence" value="ECO:0000318"/>
    <property type="project" value="GO_Central"/>
</dbReference>
<dbReference type="GO" id="GO:0000978">
    <property type="term" value="F:RNA polymerase II cis-regulatory region sequence-specific DNA binding"/>
    <property type="evidence" value="ECO:0000318"/>
    <property type="project" value="GO_Central"/>
</dbReference>
<dbReference type="GO" id="GO:0008270">
    <property type="term" value="F:zinc ion binding"/>
    <property type="evidence" value="ECO:0007669"/>
    <property type="project" value="UniProtKB-KW"/>
</dbReference>
<dbReference type="GO" id="GO:0006357">
    <property type="term" value="P:regulation of transcription by RNA polymerase II"/>
    <property type="evidence" value="ECO:0000318"/>
    <property type="project" value="GO_Central"/>
</dbReference>
<dbReference type="CDD" id="cd07765">
    <property type="entry name" value="KRAB_A-box"/>
    <property type="match status" value="1"/>
</dbReference>
<dbReference type="FunFam" id="3.30.160.60:FF:000249">
    <property type="entry name" value="Zinc finger protein 154"/>
    <property type="match status" value="1"/>
</dbReference>
<dbReference type="FunFam" id="3.30.160.60:FF:001498">
    <property type="entry name" value="Zinc finger protein 404"/>
    <property type="match status" value="1"/>
</dbReference>
<dbReference type="FunFam" id="3.30.160.60:FF:000200">
    <property type="entry name" value="zinc finger protein 510 isoform X2"/>
    <property type="match status" value="1"/>
</dbReference>
<dbReference type="FunFam" id="3.30.160.60:FF:001174">
    <property type="entry name" value="zinc finger protein 527 isoform X1"/>
    <property type="match status" value="1"/>
</dbReference>
<dbReference type="FunFam" id="3.30.160.60:FF:000281">
    <property type="entry name" value="Zinc finger protein 558 isoform X1"/>
    <property type="match status" value="2"/>
</dbReference>
<dbReference type="FunFam" id="3.30.160.60:FF:000320">
    <property type="entry name" value="Zinc finger protein 777"/>
    <property type="match status" value="3"/>
</dbReference>
<dbReference type="Gene3D" id="6.10.140.140">
    <property type="match status" value="1"/>
</dbReference>
<dbReference type="Gene3D" id="3.30.160.60">
    <property type="entry name" value="Classic Zinc Finger"/>
    <property type="match status" value="10"/>
</dbReference>
<dbReference type="InterPro" id="IPR001909">
    <property type="entry name" value="KRAB"/>
</dbReference>
<dbReference type="InterPro" id="IPR036051">
    <property type="entry name" value="KRAB_dom_sf"/>
</dbReference>
<dbReference type="InterPro" id="IPR036236">
    <property type="entry name" value="Znf_C2H2_sf"/>
</dbReference>
<dbReference type="InterPro" id="IPR013087">
    <property type="entry name" value="Znf_C2H2_type"/>
</dbReference>
<dbReference type="PANTHER" id="PTHR24390">
    <property type="entry name" value="ZINC FINGER PROTEIN"/>
    <property type="match status" value="1"/>
</dbReference>
<dbReference type="PANTHER" id="PTHR24390:SF44">
    <property type="entry name" value="ZINC FINGER PROTEIN 671"/>
    <property type="match status" value="1"/>
</dbReference>
<dbReference type="Pfam" id="PF01352">
    <property type="entry name" value="KRAB"/>
    <property type="match status" value="1"/>
</dbReference>
<dbReference type="Pfam" id="PF00096">
    <property type="entry name" value="zf-C2H2"/>
    <property type="match status" value="8"/>
</dbReference>
<dbReference type="SMART" id="SM00349">
    <property type="entry name" value="KRAB"/>
    <property type="match status" value="1"/>
</dbReference>
<dbReference type="SMART" id="SM00355">
    <property type="entry name" value="ZnF_C2H2"/>
    <property type="match status" value="9"/>
</dbReference>
<dbReference type="SUPFAM" id="SSF57667">
    <property type="entry name" value="beta-beta-alpha zinc fingers"/>
    <property type="match status" value="6"/>
</dbReference>
<dbReference type="SUPFAM" id="SSF109640">
    <property type="entry name" value="KRAB domain (Kruppel-associated box)"/>
    <property type="match status" value="1"/>
</dbReference>
<dbReference type="PROSITE" id="PS50805">
    <property type="entry name" value="KRAB"/>
    <property type="match status" value="1"/>
</dbReference>
<dbReference type="PROSITE" id="PS00028">
    <property type="entry name" value="ZINC_FINGER_C2H2_1"/>
    <property type="match status" value="9"/>
</dbReference>
<dbReference type="PROSITE" id="PS50157">
    <property type="entry name" value="ZINC_FINGER_C2H2_2"/>
    <property type="match status" value="10"/>
</dbReference>
<sequence>MLSPVSRDASDALQGRKCLRPRSRRLPLPAAVRAHGPMAELTDSARGCVVFEDVFVYFSREEWELLDDAQRLLYHDVMLENFALLASLGIAFSRSRAVMKLERGEEPWVYDQVDMTSATEREAQRGLRPGCWHGVEDEEVSSEQSIFVAGVSEVRTLMAELESHPCDICGPILKDTLHLAKYHGGKARQKPYLCGACGKQFWFSTDFDQHQNQPNGGKLFPRKEGRDSVKSCRVHVPEKTLTCGKGRRDFSATSGLLQHQASLSSMKPHKSTKLVSGFLMGQRYHRCGECGKAFTRKDTLARHQRIHTGERPYECNECGKFFSQSYDLFKHQTVHTGERPYECSECGKFFRQISGLIEHRRVHTGERLYQCGKCGKFFSSKSNLIRHQEVHTGARPYVCSECGKEFSRKHTLVLHQRTHTGERPYECSECGKAFSQSSHLNVHWRIHSSDYECSRCGKAFSCISKLIQHQKVHSGEKPYECSKCGKAFTQRPNLIRHWKVHTGERPYVCSECGREFIRKQTLVLHQRVHAGEKL</sequence>
<organism>
    <name type="scientific">Homo sapiens</name>
    <name type="common">Human</name>
    <dbReference type="NCBI Taxonomy" id="9606"/>
    <lineage>
        <taxon>Eukaryota</taxon>
        <taxon>Metazoa</taxon>
        <taxon>Chordata</taxon>
        <taxon>Craniata</taxon>
        <taxon>Vertebrata</taxon>
        <taxon>Euteleostomi</taxon>
        <taxon>Mammalia</taxon>
        <taxon>Eutheria</taxon>
        <taxon>Euarchontoglires</taxon>
        <taxon>Primates</taxon>
        <taxon>Haplorrhini</taxon>
        <taxon>Catarrhini</taxon>
        <taxon>Hominidae</taxon>
        <taxon>Homo</taxon>
    </lineage>
</organism>